<feature type="chain" id="PRO_1000206558" description="Large ribosomal subunit protein bL9">
    <location>
        <begin position="1"/>
        <end position="148"/>
    </location>
</feature>
<name>RL9_PSEFS</name>
<reference key="1">
    <citation type="journal article" date="2009" name="Genome Biol.">
        <title>Genomic and genetic analyses of diversity and plant interactions of Pseudomonas fluorescens.</title>
        <authorList>
            <person name="Silby M.W."/>
            <person name="Cerdeno-Tarraga A.M."/>
            <person name="Vernikos G.S."/>
            <person name="Giddens S.R."/>
            <person name="Jackson R.W."/>
            <person name="Preston G.M."/>
            <person name="Zhang X.-X."/>
            <person name="Moon C.D."/>
            <person name="Gehrig S.M."/>
            <person name="Godfrey S.A.C."/>
            <person name="Knight C.G."/>
            <person name="Malone J.G."/>
            <person name="Robinson Z."/>
            <person name="Spiers A.J."/>
            <person name="Harris S."/>
            <person name="Challis G.L."/>
            <person name="Yaxley A.M."/>
            <person name="Harris D."/>
            <person name="Seeger K."/>
            <person name="Murphy L."/>
            <person name="Rutter S."/>
            <person name="Squares R."/>
            <person name="Quail M.A."/>
            <person name="Saunders E."/>
            <person name="Mavromatis K."/>
            <person name="Brettin T.S."/>
            <person name="Bentley S.D."/>
            <person name="Hothersall J."/>
            <person name="Stephens E."/>
            <person name="Thomas C.M."/>
            <person name="Parkhill J."/>
            <person name="Levy S.B."/>
            <person name="Rainey P.B."/>
            <person name="Thomson N.R."/>
        </authorList>
    </citation>
    <scope>NUCLEOTIDE SEQUENCE [LARGE SCALE GENOMIC DNA]</scope>
    <source>
        <strain>SBW25</strain>
    </source>
</reference>
<sequence>MQLILLEKVANLGNLGDKVNVKAGYGRNYLLPYGKATAATAANLAAFEERRAELEKAAADKKASAETRAAQLAELEVTITATAGDEGKLFGSIGTHDIADALTASGVEVQKSEVRLPNGTIRNVGEFDVAVHLHAEVEATVRVVVVAA</sequence>
<protein>
    <recommendedName>
        <fullName evidence="1">Large ribosomal subunit protein bL9</fullName>
    </recommendedName>
    <alternativeName>
        <fullName evidence="2">50S ribosomal protein L9</fullName>
    </alternativeName>
</protein>
<evidence type="ECO:0000255" key="1">
    <source>
        <dbReference type="HAMAP-Rule" id="MF_00503"/>
    </source>
</evidence>
<evidence type="ECO:0000305" key="2"/>
<comment type="function">
    <text evidence="1">Binds to the 23S rRNA.</text>
</comment>
<comment type="similarity">
    <text evidence="1">Belongs to the bacterial ribosomal protein bL9 family.</text>
</comment>
<gene>
    <name evidence="1" type="primary">rplI</name>
    <name type="ordered locus">PFLU_0536</name>
</gene>
<proteinExistence type="inferred from homology"/>
<accession>C3KE70</accession>
<dbReference type="EMBL" id="AM181176">
    <property type="protein sequence ID" value="CAY46809.1"/>
    <property type="molecule type" value="Genomic_DNA"/>
</dbReference>
<dbReference type="RefSeq" id="WP_003171376.1">
    <property type="nucleotide sequence ID" value="NC_012660.1"/>
</dbReference>
<dbReference type="SMR" id="C3KE70"/>
<dbReference type="STRING" id="294.SRM1_00598"/>
<dbReference type="GeneID" id="97923863"/>
<dbReference type="eggNOG" id="COG0359">
    <property type="taxonomic scope" value="Bacteria"/>
</dbReference>
<dbReference type="HOGENOM" id="CLU_078938_4_1_6"/>
<dbReference type="OrthoDB" id="9788336at2"/>
<dbReference type="GO" id="GO:1990904">
    <property type="term" value="C:ribonucleoprotein complex"/>
    <property type="evidence" value="ECO:0007669"/>
    <property type="project" value="UniProtKB-KW"/>
</dbReference>
<dbReference type="GO" id="GO:0005840">
    <property type="term" value="C:ribosome"/>
    <property type="evidence" value="ECO:0007669"/>
    <property type="project" value="UniProtKB-KW"/>
</dbReference>
<dbReference type="GO" id="GO:0019843">
    <property type="term" value="F:rRNA binding"/>
    <property type="evidence" value="ECO:0007669"/>
    <property type="project" value="UniProtKB-UniRule"/>
</dbReference>
<dbReference type="GO" id="GO:0003735">
    <property type="term" value="F:structural constituent of ribosome"/>
    <property type="evidence" value="ECO:0007669"/>
    <property type="project" value="InterPro"/>
</dbReference>
<dbReference type="GO" id="GO:0006412">
    <property type="term" value="P:translation"/>
    <property type="evidence" value="ECO:0007669"/>
    <property type="project" value="UniProtKB-UniRule"/>
</dbReference>
<dbReference type="Gene3D" id="3.10.430.100">
    <property type="entry name" value="Ribosomal protein L9, C-terminal domain"/>
    <property type="match status" value="1"/>
</dbReference>
<dbReference type="Gene3D" id="3.40.5.10">
    <property type="entry name" value="Ribosomal protein L9, N-terminal domain"/>
    <property type="match status" value="1"/>
</dbReference>
<dbReference type="HAMAP" id="MF_00503">
    <property type="entry name" value="Ribosomal_bL9"/>
    <property type="match status" value="1"/>
</dbReference>
<dbReference type="InterPro" id="IPR000244">
    <property type="entry name" value="Ribosomal_bL9"/>
</dbReference>
<dbReference type="InterPro" id="IPR009027">
    <property type="entry name" value="Ribosomal_bL9/RNase_H1_N"/>
</dbReference>
<dbReference type="InterPro" id="IPR020594">
    <property type="entry name" value="Ribosomal_bL9_bac/chp"/>
</dbReference>
<dbReference type="InterPro" id="IPR020069">
    <property type="entry name" value="Ribosomal_bL9_C"/>
</dbReference>
<dbReference type="InterPro" id="IPR036791">
    <property type="entry name" value="Ribosomal_bL9_C_sf"/>
</dbReference>
<dbReference type="InterPro" id="IPR020070">
    <property type="entry name" value="Ribosomal_bL9_N"/>
</dbReference>
<dbReference type="InterPro" id="IPR036935">
    <property type="entry name" value="Ribosomal_bL9_N_sf"/>
</dbReference>
<dbReference type="NCBIfam" id="TIGR00158">
    <property type="entry name" value="L9"/>
    <property type="match status" value="1"/>
</dbReference>
<dbReference type="PANTHER" id="PTHR21368">
    <property type="entry name" value="50S RIBOSOMAL PROTEIN L9"/>
    <property type="match status" value="1"/>
</dbReference>
<dbReference type="Pfam" id="PF03948">
    <property type="entry name" value="Ribosomal_L9_C"/>
    <property type="match status" value="1"/>
</dbReference>
<dbReference type="Pfam" id="PF01281">
    <property type="entry name" value="Ribosomal_L9_N"/>
    <property type="match status" value="1"/>
</dbReference>
<dbReference type="SUPFAM" id="SSF55658">
    <property type="entry name" value="L9 N-domain-like"/>
    <property type="match status" value="1"/>
</dbReference>
<dbReference type="SUPFAM" id="SSF55653">
    <property type="entry name" value="Ribosomal protein L9 C-domain"/>
    <property type="match status" value="1"/>
</dbReference>
<dbReference type="PROSITE" id="PS00651">
    <property type="entry name" value="RIBOSOMAL_L9"/>
    <property type="match status" value="1"/>
</dbReference>
<organism>
    <name type="scientific">Pseudomonas fluorescens (strain SBW25)</name>
    <dbReference type="NCBI Taxonomy" id="216595"/>
    <lineage>
        <taxon>Bacteria</taxon>
        <taxon>Pseudomonadati</taxon>
        <taxon>Pseudomonadota</taxon>
        <taxon>Gammaproteobacteria</taxon>
        <taxon>Pseudomonadales</taxon>
        <taxon>Pseudomonadaceae</taxon>
        <taxon>Pseudomonas</taxon>
    </lineage>
</organism>
<keyword id="KW-0687">Ribonucleoprotein</keyword>
<keyword id="KW-0689">Ribosomal protein</keyword>
<keyword id="KW-0694">RNA-binding</keyword>
<keyword id="KW-0699">rRNA-binding</keyword>